<organism>
    <name type="scientific">Haemophilus ducreyi (strain 35000HP / ATCC 700724)</name>
    <dbReference type="NCBI Taxonomy" id="233412"/>
    <lineage>
        <taxon>Bacteria</taxon>
        <taxon>Pseudomonadati</taxon>
        <taxon>Pseudomonadota</taxon>
        <taxon>Gammaproteobacteria</taxon>
        <taxon>Pasteurellales</taxon>
        <taxon>Pasteurellaceae</taxon>
        <taxon>Haemophilus</taxon>
    </lineage>
</organism>
<keyword id="KW-0997">Cell inner membrane</keyword>
<keyword id="KW-1003">Cell membrane</keyword>
<keyword id="KW-0143">Chaperone</keyword>
<keyword id="KW-0472">Membrane</keyword>
<keyword id="KW-1185">Reference proteome</keyword>
<keyword id="KW-0812">Transmembrane</keyword>
<keyword id="KW-1133">Transmembrane helix</keyword>
<protein>
    <recommendedName>
        <fullName evidence="1">Co-chaperone protein DjlA</fullName>
    </recommendedName>
</protein>
<sequence>MQFIGKIIGFFIGYKLFGGLFGGLLGIFIGHLADKKLYELGSVRSSIFGKNLTRQSLFMQTTFAVLGHIAKAKGRVTEDDIQLARQLMVRLRLDNANQQLAQQAFTLGKEANFPLRQVIQEFREACGQRADLLRFFVEVQMQAAAQDGQLDINEQQILFTIAETIGMSRFQFEQMLAMVMAAQQFRSGGFYQQYSQQQGSYQQHSYDGYQYSNNGPNIKDAYTVLGINENDEHNAVKRAYRKLMNEHHPDKLAAKGLPDEMMELAKEKAQQIQAAYDLICKTKGWK</sequence>
<reference key="1">
    <citation type="submission" date="2003-06" db="EMBL/GenBank/DDBJ databases">
        <title>The complete genome sequence of Haemophilus ducreyi.</title>
        <authorList>
            <person name="Munson R.S. Jr."/>
            <person name="Ray W.C."/>
            <person name="Mahairas G."/>
            <person name="Sabo P."/>
            <person name="Mungur R."/>
            <person name="Johnson L."/>
            <person name="Nguyen D."/>
            <person name="Wang J."/>
            <person name="Forst C."/>
            <person name="Hood L."/>
        </authorList>
    </citation>
    <scope>NUCLEOTIDE SEQUENCE [LARGE SCALE GENOMIC DNA]</scope>
    <source>
        <strain>35000HP / ATCC 700724</strain>
    </source>
</reference>
<dbReference type="EMBL" id="AE017143">
    <property type="protein sequence ID" value="AAP96525.1"/>
    <property type="molecule type" value="Genomic_DNA"/>
</dbReference>
<dbReference type="RefSeq" id="WP_010945554.1">
    <property type="nucleotide sequence ID" value="NC_002940.2"/>
</dbReference>
<dbReference type="STRING" id="233412.HD_1771"/>
<dbReference type="KEGG" id="hdu:HD_1771"/>
<dbReference type="eggNOG" id="COG1076">
    <property type="taxonomic scope" value="Bacteria"/>
</dbReference>
<dbReference type="HOGENOM" id="CLU_066221_1_0_6"/>
<dbReference type="OrthoDB" id="9782583at2"/>
<dbReference type="Proteomes" id="UP000001022">
    <property type="component" value="Chromosome"/>
</dbReference>
<dbReference type="GO" id="GO:0005886">
    <property type="term" value="C:plasma membrane"/>
    <property type="evidence" value="ECO:0007669"/>
    <property type="project" value="UniProtKB-SubCell"/>
</dbReference>
<dbReference type="GO" id="GO:0051087">
    <property type="term" value="F:protein-folding chaperone binding"/>
    <property type="evidence" value="ECO:0007669"/>
    <property type="project" value="InterPro"/>
</dbReference>
<dbReference type="CDD" id="cd06257">
    <property type="entry name" value="DnaJ"/>
    <property type="match status" value="1"/>
</dbReference>
<dbReference type="CDD" id="cd07316">
    <property type="entry name" value="terB_like_DjlA"/>
    <property type="match status" value="1"/>
</dbReference>
<dbReference type="FunFam" id="1.10.287.110:FF:000011">
    <property type="entry name" value="Co-chaperone protein DjlA"/>
    <property type="match status" value="1"/>
</dbReference>
<dbReference type="Gene3D" id="1.10.287.110">
    <property type="entry name" value="DnaJ domain"/>
    <property type="match status" value="1"/>
</dbReference>
<dbReference type="Gene3D" id="1.10.3680.10">
    <property type="entry name" value="TerB-like"/>
    <property type="match status" value="1"/>
</dbReference>
<dbReference type="HAMAP" id="MF_01153">
    <property type="entry name" value="DjlA"/>
    <property type="match status" value="1"/>
</dbReference>
<dbReference type="InterPro" id="IPR023749">
    <property type="entry name" value="DjlA"/>
</dbReference>
<dbReference type="InterPro" id="IPR050817">
    <property type="entry name" value="DjlA_DnaK_co-chaperone"/>
</dbReference>
<dbReference type="InterPro" id="IPR007791">
    <property type="entry name" value="DjlA_N"/>
</dbReference>
<dbReference type="InterPro" id="IPR001623">
    <property type="entry name" value="DnaJ_domain"/>
</dbReference>
<dbReference type="InterPro" id="IPR036869">
    <property type="entry name" value="J_dom_sf"/>
</dbReference>
<dbReference type="InterPro" id="IPR029024">
    <property type="entry name" value="TerB-like"/>
</dbReference>
<dbReference type="NCBIfam" id="NF006948">
    <property type="entry name" value="PRK09430.1"/>
    <property type="match status" value="1"/>
</dbReference>
<dbReference type="PANTHER" id="PTHR24074">
    <property type="entry name" value="CO-CHAPERONE PROTEIN DJLA"/>
    <property type="match status" value="1"/>
</dbReference>
<dbReference type="Pfam" id="PF00226">
    <property type="entry name" value="DnaJ"/>
    <property type="match status" value="1"/>
</dbReference>
<dbReference type="Pfam" id="PF05099">
    <property type="entry name" value="TerB"/>
    <property type="match status" value="1"/>
</dbReference>
<dbReference type="PRINTS" id="PR00625">
    <property type="entry name" value="JDOMAIN"/>
</dbReference>
<dbReference type="SMART" id="SM00271">
    <property type="entry name" value="DnaJ"/>
    <property type="match status" value="1"/>
</dbReference>
<dbReference type="SUPFAM" id="SSF46565">
    <property type="entry name" value="Chaperone J-domain"/>
    <property type="match status" value="1"/>
</dbReference>
<dbReference type="PROSITE" id="PS50076">
    <property type="entry name" value="DNAJ_2"/>
    <property type="match status" value="1"/>
</dbReference>
<accession>Q7VKU4</accession>
<feature type="chain" id="PRO_0000209428" description="Co-chaperone protein DjlA">
    <location>
        <begin position="1"/>
        <end position="286"/>
    </location>
</feature>
<feature type="topological domain" description="Periplasmic" evidence="1">
    <location>
        <begin position="1"/>
        <end position="6"/>
    </location>
</feature>
<feature type="transmembrane region" description="Helical" evidence="1">
    <location>
        <begin position="7"/>
        <end position="31"/>
    </location>
</feature>
<feature type="topological domain" description="Cytoplasmic" evidence="1">
    <location>
        <begin position="32"/>
        <end position="286"/>
    </location>
</feature>
<feature type="domain" description="J" evidence="1">
    <location>
        <begin position="220"/>
        <end position="286"/>
    </location>
</feature>
<evidence type="ECO:0000255" key="1">
    <source>
        <dbReference type="HAMAP-Rule" id="MF_01153"/>
    </source>
</evidence>
<comment type="function">
    <text evidence="1">Regulatory DnaK co-chaperone. Direct interaction between DnaK and DjlA is needed for the induction of the wcaABCDE operon, involved in the synthesis of a colanic acid polysaccharide capsule, possibly through activation of the RcsB/RcsC phosphotransfer signaling pathway. The colanic acid capsule may help the bacterium survive conditions outside the host.</text>
</comment>
<comment type="subunit">
    <text evidence="1">Homodimer.</text>
</comment>
<comment type="subcellular location">
    <subcellularLocation>
        <location evidence="1">Cell inner membrane</location>
        <topology evidence="1">Single-pass type III membrane protein</topology>
    </subcellularLocation>
</comment>
<comment type="domain">
    <text evidence="1">The transmembrane domain is a dimerization domain.</text>
</comment>
<proteinExistence type="inferred from homology"/>
<name>DJLA_HAEDU</name>
<gene>
    <name evidence="1" type="primary">djlA</name>
    <name type="ordered locus">HD_1771</name>
</gene>